<accession>A0Q7I7</accession>
<feature type="chain" id="PRO_1000067350" description="Anhydro-N-acetylmuramic acid kinase">
    <location>
        <begin position="1"/>
        <end position="381"/>
    </location>
</feature>
<feature type="binding site" evidence="1">
    <location>
        <begin position="13"/>
        <end position="20"/>
    </location>
    <ligand>
        <name>ATP</name>
        <dbReference type="ChEBI" id="CHEBI:30616"/>
    </ligand>
</feature>
<comment type="function">
    <text evidence="1">Catalyzes the specific phosphorylation of 1,6-anhydro-N-acetylmuramic acid (anhMurNAc) with the simultaneous cleavage of the 1,6-anhydro ring, generating MurNAc-6-P. Is required for the utilization of anhMurNAc either imported from the medium or derived from its own cell wall murein, and thus plays a role in cell wall recycling.</text>
</comment>
<comment type="catalytic activity">
    <reaction evidence="1">
        <text>1,6-anhydro-N-acetyl-beta-muramate + ATP + H2O = N-acetyl-D-muramate 6-phosphate + ADP + H(+)</text>
        <dbReference type="Rhea" id="RHEA:24952"/>
        <dbReference type="ChEBI" id="CHEBI:15377"/>
        <dbReference type="ChEBI" id="CHEBI:15378"/>
        <dbReference type="ChEBI" id="CHEBI:30616"/>
        <dbReference type="ChEBI" id="CHEBI:58690"/>
        <dbReference type="ChEBI" id="CHEBI:58722"/>
        <dbReference type="ChEBI" id="CHEBI:456216"/>
        <dbReference type="EC" id="2.7.1.170"/>
    </reaction>
</comment>
<comment type="pathway">
    <text evidence="1">Amino-sugar metabolism; 1,6-anhydro-N-acetylmuramate degradation.</text>
</comment>
<comment type="pathway">
    <text evidence="1">Cell wall biogenesis; peptidoglycan recycling.</text>
</comment>
<comment type="similarity">
    <text evidence="1">Belongs to the anhydro-N-acetylmuramic acid kinase family.</text>
</comment>
<proteinExistence type="inferred from homology"/>
<keyword id="KW-0067">ATP-binding</keyword>
<keyword id="KW-0119">Carbohydrate metabolism</keyword>
<keyword id="KW-0418">Kinase</keyword>
<keyword id="KW-0547">Nucleotide-binding</keyword>
<keyword id="KW-0808">Transferase</keyword>
<gene>
    <name evidence="1" type="primary">anmK</name>
    <name type="ordered locus">FTN_1326</name>
</gene>
<protein>
    <recommendedName>
        <fullName evidence="1">Anhydro-N-acetylmuramic acid kinase</fullName>
        <ecNumber evidence="1">2.7.1.170</ecNumber>
    </recommendedName>
    <alternativeName>
        <fullName evidence="1">AnhMurNAc kinase</fullName>
    </alternativeName>
</protein>
<sequence length="381" mass="41720">MSEYKYCVGIMSGTSLDGIDVALCKIRGSGLDTDVKLIDCQTYPYPTNLLCDIKKSLDLSTSNAQLLCSLNFKLGIEYANAVKKLVAANNLNLKDIAFIASHGQTIYHQANNERGFIKSSLQLGDAATIAYECQTTVVSNFRAGDIAAGGDGAPLVPYVDYLLYRDKDKSRALHNIGGIANTTIIPKNANIDDIYAFDTGPGNMMINRSMEVLFNQDYDKGGDTAAAGIVIVDMLQELLDNPYLKQKPPKSTGRELFGINYTDKIIAKYKQNKPEDIVHTLTIFTAQSIVRAYKDFVFNKNKLDQIIFTGGGAYNKFLIKTISDLLDVEVLTFEDIGESSDAKEAIAFAVLGNETLNKSYNNIPSATGAKSRVILGQINFF</sequence>
<reference key="1">
    <citation type="journal article" date="2007" name="Genome Biol.">
        <title>Comparison of Francisella tularensis genomes reveals evolutionary events associated with the emergence of human pathogenic strains.</title>
        <authorList>
            <person name="Rohmer L."/>
            <person name="Fong C."/>
            <person name="Abmayr S."/>
            <person name="Wasnick M."/>
            <person name="Larson Freeman T.J."/>
            <person name="Radey M."/>
            <person name="Guina T."/>
            <person name="Svensson K."/>
            <person name="Hayden H.S."/>
            <person name="Jacobs M."/>
            <person name="Gallagher L.A."/>
            <person name="Manoil C."/>
            <person name="Ernst R.K."/>
            <person name="Drees B."/>
            <person name="Buckley D."/>
            <person name="Haugen E."/>
            <person name="Bovee D."/>
            <person name="Zhou Y."/>
            <person name="Chang J."/>
            <person name="Levy R."/>
            <person name="Lim R."/>
            <person name="Gillett W."/>
            <person name="Guenthener D."/>
            <person name="Kang A."/>
            <person name="Shaffer S.A."/>
            <person name="Taylor G."/>
            <person name="Chen J."/>
            <person name="Gallis B."/>
            <person name="D'Argenio D.A."/>
            <person name="Forsman M."/>
            <person name="Olson M.V."/>
            <person name="Goodlett D.R."/>
            <person name="Kaul R."/>
            <person name="Miller S.I."/>
            <person name="Brittnacher M.J."/>
        </authorList>
    </citation>
    <scope>NUCLEOTIDE SEQUENCE [LARGE SCALE GENOMIC DNA]</scope>
    <source>
        <strain>U112</strain>
    </source>
</reference>
<dbReference type="EC" id="2.7.1.170" evidence="1"/>
<dbReference type="EMBL" id="CP000439">
    <property type="protein sequence ID" value="ABK90202.1"/>
    <property type="molecule type" value="Genomic_DNA"/>
</dbReference>
<dbReference type="RefSeq" id="WP_011733699.1">
    <property type="nucleotide sequence ID" value="NC_008601.1"/>
</dbReference>
<dbReference type="SMR" id="A0Q7I7"/>
<dbReference type="KEGG" id="ftn:FTN_1326"/>
<dbReference type="BioCyc" id="FTUL401614:G1G75-1371-MONOMER"/>
<dbReference type="UniPathway" id="UPA00343"/>
<dbReference type="UniPathway" id="UPA00544"/>
<dbReference type="Proteomes" id="UP000000762">
    <property type="component" value="Chromosome"/>
</dbReference>
<dbReference type="GO" id="GO:0005524">
    <property type="term" value="F:ATP binding"/>
    <property type="evidence" value="ECO:0007669"/>
    <property type="project" value="UniProtKB-UniRule"/>
</dbReference>
<dbReference type="GO" id="GO:0016301">
    <property type="term" value="F:kinase activity"/>
    <property type="evidence" value="ECO:0007669"/>
    <property type="project" value="UniProtKB-KW"/>
</dbReference>
<dbReference type="GO" id="GO:0016773">
    <property type="term" value="F:phosphotransferase activity, alcohol group as acceptor"/>
    <property type="evidence" value="ECO:0007669"/>
    <property type="project" value="UniProtKB-UniRule"/>
</dbReference>
<dbReference type="GO" id="GO:0097175">
    <property type="term" value="P:1,6-anhydro-N-acetyl-beta-muramic acid catabolic process"/>
    <property type="evidence" value="ECO:0007669"/>
    <property type="project" value="UniProtKB-UniRule"/>
</dbReference>
<dbReference type="GO" id="GO:0006040">
    <property type="term" value="P:amino sugar metabolic process"/>
    <property type="evidence" value="ECO:0007669"/>
    <property type="project" value="InterPro"/>
</dbReference>
<dbReference type="GO" id="GO:0009254">
    <property type="term" value="P:peptidoglycan turnover"/>
    <property type="evidence" value="ECO:0007669"/>
    <property type="project" value="UniProtKB-UniRule"/>
</dbReference>
<dbReference type="CDD" id="cd24050">
    <property type="entry name" value="ASKHA_NBD_ANMK"/>
    <property type="match status" value="1"/>
</dbReference>
<dbReference type="Gene3D" id="3.30.420.40">
    <property type="match status" value="2"/>
</dbReference>
<dbReference type="HAMAP" id="MF_01270">
    <property type="entry name" value="AnhMurNAc_kinase"/>
    <property type="match status" value="1"/>
</dbReference>
<dbReference type="InterPro" id="IPR005338">
    <property type="entry name" value="Anhydro_N_Ac-Mur_kinase"/>
</dbReference>
<dbReference type="InterPro" id="IPR043129">
    <property type="entry name" value="ATPase_NBD"/>
</dbReference>
<dbReference type="NCBIfam" id="NF007142">
    <property type="entry name" value="PRK09585.2-1"/>
    <property type="match status" value="1"/>
</dbReference>
<dbReference type="NCBIfam" id="NF007148">
    <property type="entry name" value="PRK09585.3-2"/>
    <property type="match status" value="1"/>
</dbReference>
<dbReference type="PANTHER" id="PTHR30605">
    <property type="entry name" value="ANHYDRO-N-ACETYLMURAMIC ACID KINASE"/>
    <property type="match status" value="1"/>
</dbReference>
<dbReference type="PANTHER" id="PTHR30605:SF0">
    <property type="entry name" value="ANHYDRO-N-ACETYLMURAMIC ACID KINASE"/>
    <property type="match status" value="1"/>
</dbReference>
<dbReference type="Pfam" id="PF03702">
    <property type="entry name" value="AnmK"/>
    <property type="match status" value="1"/>
</dbReference>
<dbReference type="SUPFAM" id="SSF53067">
    <property type="entry name" value="Actin-like ATPase domain"/>
    <property type="match status" value="1"/>
</dbReference>
<evidence type="ECO:0000255" key="1">
    <source>
        <dbReference type="HAMAP-Rule" id="MF_01270"/>
    </source>
</evidence>
<name>ANMK_FRATN</name>
<organism>
    <name type="scientific">Francisella tularensis subsp. novicida (strain U112)</name>
    <dbReference type="NCBI Taxonomy" id="401614"/>
    <lineage>
        <taxon>Bacteria</taxon>
        <taxon>Pseudomonadati</taxon>
        <taxon>Pseudomonadota</taxon>
        <taxon>Gammaproteobacteria</taxon>
        <taxon>Thiotrichales</taxon>
        <taxon>Francisellaceae</taxon>
        <taxon>Francisella</taxon>
    </lineage>
</organism>